<keyword id="KW-0997">Cell inner membrane</keyword>
<keyword id="KW-1003">Cell membrane</keyword>
<keyword id="KW-0249">Electron transport</keyword>
<keyword id="KW-0472">Membrane</keyword>
<keyword id="KW-1278">Translocase</keyword>
<keyword id="KW-0812">Transmembrane</keyword>
<keyword id="KW-1133">Transmembrane helix</keyword>
<keyword id="KW-0813">Transport</keyword>
<accession>Q8KA17</accession>
<name>RNFE_BUCAP</name>
<gene>
    <name evidence="1" type="primary">rnfE</name>
    <name type="ordered locus">BUsg_110</name>
</gene>
<feature type="chain" id="PRO_0000214267" description="Ion-translocating oxidoreductase complex subunit E">
    <location>
        <begin position="1"/>
        <end position="223"/>
    </location>
</feature>
<feature type="transmembrane region" description="Helical" evidence="1">
    <location>
        <begin position="17"/>
        <end position="37"/>
    </location>
</feature>
<feature type="transmembrane region" description="Helical" evidence="1">
    <location>
        <begin position="38"/>
        <end position="58"/>
    </location>
</feature>
<feature type="transmembrane region" description="Helical" evidence="1">
    <location>
        <begin position="68"/>
        <end position="88"/>
    </location>
</feature>
<feature type="transmembrane region" description="Helical" evidence="1">
    <location>
        <begin position="91"/>
        <end position="111"/>
    </location>
</feature>
<feature type="transmembrane region" description="Helical" evidence="1">
    <location>
        <begin position="124"/>
        <end position="144"/>
    </location>
</feature>
<feature type="transmembrane region" description="Helical" evidence="1">
    <location>
        <begin position="156"/>
        <end position="176"/>
    </location>
</feature>
<feature type="transmembrane region" description="Helical" evidence="1">
    <location>
        <begin position="181"/>
        <end position="201"/>
    </location>
</feature>
<proteinExistence type="inferred from homology"/>
<evidence type="ECO:0000255" key="1">
    <source>
        <dbReference type="HAMAP-Rule" id="MF_00478"/>
    </source>
</evidence>
<protein>
    <recommendedName>
        <fullName evidence="1">Ion-translocating oxidoreductase complex subunit E</fullName>
        <ecNumber evidence="1">7.-.-.-</ecNumber>
    </recommendedName>
    <alternativeName>
        <fullName evidence="1">Rnf electron transport complex subunit E</fullName>
    </alternativeName>
</protein>
<dbReference type="EC" id="7.-.-.-" evidence="1"/>
<dbReference type="EMBL" id="AE013218">
    <property type="protein sequence ID" value="AAM67679.1"/>
    <property type="molecule type" value="Genomic_DNA"/>
</dbReference>
<dbReference type="RefSeq" id="WP_011053645.1">
    <property type="nucleotide sequence ID" value="NC_004061.1"/>
</dbReference>
<dbReference type="SMR" id="Q8KA17"/>
<dbReference type="STRING" id="198804.BUsg_110"/>
<dbReference type="GeneID" id="93003580"/>
<dbReference type="KEGG" id="bas:BUsg_110"/>
<dbReference type="eggNOG" id="COG4660">
    <property type="taxonomic scope" value="Bacteria"/>
</dbReference>
<dbReference type="HOGENOM" id="CLU_046659_1_0_6"/>
<dbReference type="Proteomes" id="UP000000416">
    <property type="component" value="Chromosome"/>
</dbReference>
<dbReference type="GO" id="GO:0005886">
    <property type="term" value="C:plasma membrane"/>
    <property type="evidence" value="ECO:0007669"/>
    <property type="project" value="UniProtKB-SubCell"/>
</dbReference>
<dbReference type="GO" id="GO:0022900">
    <property type="term" value="P:electron transport chain"/>
    <property type="evidence" value="ECO:0007669"/>
    <property type="project" value="UniProtKB-UniRule"/>
</dbReference>
<dbReference type="HAMAP" id="MF_00478">
    <property type="entry name" value="RsxE_RnfE"/>
    <property type="match status" value="1"/>
</dbReference>
<dbReference type="InterPro" id="IPR003667">
    <property type="entry name" value="NqrDE/RnfAE"/>
</dbReference>
<dbReference type="InterPro" id="IPR010968">
    <property type="entry name" value="RnfE"/>
</dbReference>
<dbReference type="NCBIfam" id="NF009070">
    <property type="entry name" value="PRK12405.1"/>
    <property type="match status" value="1"/>
</dbReference>
<dbReference type="NCBIfam" id="TIGR01948">
    <property type="entry name" value="rnfE"/>
    <property type="match status" value="1"/>
</dbReference>
<dbReference type="PANTHER" id="PTHR30586">
    <property type="entry name" value="ELECTRON TRANSPORT COMPLEX PROTEIN RNFE"/>
    <property type="match status" value="1"/>
</dbReference>
<dbReference type="PANTHER" id="PTHR30586:SF0">
    <property type="entry name" value="ION-TRANSLOCATING OXIDOREDUCTASE COMPLEX SUBUNIT E"/>
    <property type="match status" value="1"/>
</dbReference>
<dbReference type="Pfam" id="PF02508">
    <property type="entry name" value="Rnf-Nqr"/>
    <property type="match status" value="1"/>
</dbReference>
<dbReference type="PIRSF" id="PIRSF006102">
    <property type="entry name" value="NQR_DE"/>
    <property type="match status" value="1"/>
</dbReference>
<organism>
    <name type="scientific">Buchnera aphidicola subsp. Schizaphis graminum (strain Sg)</name>
    <dbReference type="NCBI Taxonomy" id="198804"/>
    <lineage>
        <taxon>Bacteria</taxon>
        <taxon>Pseudomonadati</taxon>
        <taxon>Pseudomonadota</taxon>
        <taxon>Gammaproteobacteria</taxon>
        <taxon>Enterobacterales</taxon>
        <taxon>Erwiniaceae</taxon>
        <taxon>Buchnera</taxon>
    </lineage>
</organism>
<reference key="1">
    <citation type="journal article" date="2002" name="Science">
        <title>50 million years of genomic stasis in endosymbiotic bacteria.</title>
        <authorList>
            <person name="Tamas I."/>
            <person name="Klasson L."/>
            <person name="Canbaeck B."/>
            <person name="Naeslund A.K."/>
            <person name="Eriksson A.-S."/>
            <person name="Wernegreen J.J."/>
            <person name="Sandstroem J.P."/>
            <person name="Moran N.A."/>
            <person name="Andersson S.G.E."/>
        </authorList>
    </citation>
    <scope>NUCLEOTIDE SEQUENCE [LARGE SCALE GENOMIC DNA]</scope>
    <source>
        <strain>Sg</strain>
    </source>
</reference>
<sequence>MEFKKFFKKRLWNNNSSLVQLLGLCPILAMTTNTINAIGLGITTTFVLTITNSIISILKNFIPKDIRIPIYMIIVSSTVTCIEMLLHAYQFNLYQSLGVFIPLIVTNCIVVGRADCIAYKSSFVISFLDGMSIGLGSTFAMFVIGSIREILGNGTFLFGANKIFNVLDHSFFFTFIDKNSTIILAMLPSGGFLVLGFVIAFKNYLDLGKKNCLKCFHSCKLKK</sequence>
<comment type="function">
    <text evidence="1">Part of a membrane-bound complex that couples electron transfer with translocation of ions across the membrane.</text>
</comment>
<comment type="subunit">
    <text evidence="1">The complex is composed of six subunits: RnfA, RnfB, RnfC, RnfD, RnfE and RnfG.</text>
</comment>
<comment type="subcellular location">
    <subcellularLocation>
        <location evidence="1">Cell inner membrane</location>
        <topology evidence="1">Multi-pass membrane protein</topology>
    </subcellularLocation>
</comment>
<comment type="similarity">
    <text evidence="1">Belongs to the NqrDE/RnfAE family.</text>
</comment>